<organism>
    <name type="scientific">Arabidopsis thaliana</name>
    <name type="common">Mouse-ear cress</name>
    <dbReference type="NCBI Taxonomy" id="3702"/>
    <lineage>
        <taxon>Eukaryota</taxon>
        <taxon>Viridiplantae</taxon>
        <taxon>Streptophyta</taxon>
        <taxon>Embryophyta</taxon>
        <taxon>Tracheophyta</taxon>
        <taxon>Spermatophyta</taxon>
        <taxon>Magnoliopsida</taxon>
        <taxon>eudicotyledons</taxon>
        <taxon>Gunneridae</taxon>
        <taxon>Pentapetalae</taxon>
        <taxon>rosids</taxon>
        <taxon>malvids</taxon>
        <taxon>Brassicales</taxon>
        <taxon>Brassicaceae</taxon>
        <taxon>Camelineae</taxon>
        <taxon>Arabidopsis</taxon>
    </lineage>
</organism>
<protein>
    <recommendedName>
        <fullName evidence="10">NAC domain-containing protein 78</fullName>
        <shortName evidence="10">ANAC078</shortName>
    </recommendedName>
    <alternativeName>
        <fullName evidence="11">Protein NTM1-like 11</fullName>
    </alternativeName>
</protein>
<gene>
    <name type="primary">NAC078</name>
    <name evidence="13" type="synonym">NAC2</name>
    <name evidence="11" type="synonym">NTL11</name>
    <name type="ordered locus">At5g04410</name>
    <name type="ORF">T32M21.10</name>
</gene>
<accession>Q84K00</accession>
<accession>Q84UG1</accession>
<accession>Q9LZ84</accession>
<accession>Q9SNW1</accession>
<keyword id="KW-0010">Activator</keyword>
<keyword id="KW-0238">DNA-binding</keyword>
<keyword id="KW-0472">Membrane</keyword>
<keyword id="KW-0539">Nucleus</keyword>
<keyword id="KW-1185">Reference proteome</keyword>
<keyword id="KW-0346">Stress response</keyword>
<keyword id="KW-0804">Transcription</keyword>
<keyword id="KW-0805">Transcription regulation</keyword>
<keyword id="KW-0812">Transmembrane</keyword>
<keyword id="KW-1133">Transmembrane helix</keyword>
<evidence type="ECO:0000250" key="1">
    <source>
        <dbReference type="UniProtKB" id="Q949N0"/>
    </source>
</evidence>
<evidence type="ECO:0000255" key="2"/>
<evidence type="ECO:0000255" key="3">
    <source>
        <dbReference type="PROSITE-ProRule" id="PRU00353"/>
    </source>
</evidence>
<evidence type="ECO:0000256" key="4">
    <source>
        <dbReference type="SAM" id="MobiDB-lite"/>
    </source>
</evidence>
<evidence type="ECO:0000269" key="5">
    <source>
    </source>
</evidence>
<evidence type="ECO:0000269" key="6">
    <source>
    </source>
</evidence>
<evidence type="ECO:0000269" key="7">
    <source>
    </source>
</evidence>
<evidence type="ECO:0000269" key="8">
    <source>
    </source>
</evidence>
<evidence type="ECO:0000269" key="9">
    <source ref="1"/>
</evidence>
<evidence type="ECO:0000303" key="10">
    <source>
    </source>
</evidence>
<evidence type="ECO:0000303" key="11">
    <source>
    </source>
</evidence>
<evidence type="ECO:0000305" key="12"/>
<evidence type="ECO:0000312" key="13">
    <source>
        <dbReference type="EMBL" id="AED90739.1"/>
    </source>
</evidence>
<feature type="chain" id="PRO_0000132314" description="NAC domain-containing protein 78">
    <location>
        <begin position="1"/>
        <end position="567"/>
    </location>
</feature>
<feature type="transmembrane region" description="Helical" evidence="2">
    <location>
        <begin position="544"/>
        <end position="564"/>
    </location>
</feature>
<feature type="domain" description="NAC" evidence="3">
    <location>
        <begin position="9"/>
        <end position="159"/>
    </location>
</feature>
<feature type="DNA-binding region" evidence="3">
    <location>
        <begin position="108"/>
        <end position="165"/>
    </location>
</feature>
<feature type="region of interest" description="Disordered" evidence="4">
    <location>
        <begin position="393"/>
        <end position="436"/>
    </location>
</feature>
<feature type="compositionally biased region" description="Basic and acidic residues" evidence="4">
    <location>
        <begin position="397"/>
        <end position="423"/>
    </location>
</feature>
<feature type="sequence variant" evidence="5">
    <original>N</original>
    <variation>D</variation>
    <location>
        <position position="393"/>
    </location>
</feature>
<feature type="sequence conflict" description="In Ref. 1; AAF09254." evidence="12" ref="1">
    <original>T</original>
    <variation>A</variation>
    <location>
        <position position="7"/>
    </location>
</feature>
<feature type="sequence conflict" description="In Ref. 1; AAF09254." evidence="12" ref="1">
    <original>VV</original>
    <variation>IL</variation>
    <location>
        <begin position="107"/>
        <end position="108"/>
    </location>
</feature>
<feature type="sequence conflict" description="In Ref. 1; AAF09254." evidence="12" ref="1">
    <original>R</original>
    <variation>K</variation>
    <location>
        <position position="126"/>
    </location>
</feature>
<feature type="sequence conflict" description="In Ref. 1; AAF09254." evidence="12" ref="1">
    <original>H</original>
    <variation>Q</variation>
    <location>
        <position position="132"/>
    </location>
</feature>
<feature type="sequence conflict" description="In Ref. 1; AAF09254." evidence="12" ref="1">
    <original>G</original>
    <variation>V</variation>
    <location>
        <position position="163"/>
    </location>
</feature>
<feature type="sequence conflict" description="In Ref. 1; AAF09254." evidence="12" ref="1">
    <original>D</original>
    <variation>E</variation>
    <location>
        <position position="381"/>
    </location>
</feature>
<feature type="sequence conflict" description="In Ref. 1; AAF09254." evidence="12" ref="1">
    <original>QEALD</original>
    <variation>PETLE</variation>
    <location>
        <begin position="394"/>
        <end position="398"/>
    </location>
</feature>
<feature type="sequence conflict" description="In Ref. 1; AAF09254." evidence="12" ref="1">
    <original>L</original>
    <variation>M</variation>
    <location>
        <position position="406"/>
    </location>
</feature>
<feature type="sequence conflict" description="In Ref. 1; AAF09254." evidence="12" ref="1">
    <original>G</original>
    <variation>R</variation>
    <location>
        <position position="425"/>
    </location>
</feature>
<name>NAC78_ARATH</name>
<comment type="function">
    <text evidence="1 7 8">Transcriptional activator activated by proteolytic cleavage through regulated intramembrane proteolysis (RIP) (By similarity). Transcripition activator associated with the induction of genes related to flavonoid biosynthesis and required for the accumulation of anthocyanins in response to high light stress (PubMed:19887540). Plays a role in the regulation of 20S and 26S proteasomes in response to high light stress (PubMed:21889048).</text>
</comment>
<comment type="subcellular location">
    <subcellularLocation>
        <location evidence="1">Membrane</location>
        <topology evidence="2">Single-pass membrane protein</topology>
    </subcellularLocation>
    <subcellularLocation>
        <location evidence="3 7">Nucleus</location>
    </subcellularLocation>
    <text evidence="1">Localized primarily in plasma membrane or endoplasmic reticulum membrane as dormant form and, upon specific stress or signal, is processed into a transcriptionally active and nuclear form after a proteolytic cleavage through regulated intramembrane proteolysis (RIP).</text>
</comment>
<comment type="tissue specificity">
    <text evidence="6 9">Expressed in root meristem (Ref.1). Expressed in roots, rosette leaves, cauline leaves, shoot apex, stems and flowers (PubMed:17158162).</text>
</comment>
<comment type="induction">
    <text evidence="6 7">By exposure to high light (PubMed:19887540). Induced by heat and methyl methanesulfonate (MMS) treatment (PubMed:17158162).</text>
</comment>
<comment type="domain">
    <text evidence="3">The NAC domain includes a DNA binding domain and a dimerization domain.</text>
</comment>
<comment type="disruption phenotype">
    <text evidence="7">No visible phenotype under normal growth conditions.</text>
</comment>
<comment type="sequence caution" evidence="12">
    <conflict type="frameshift">
        <sequence resource="EMBL-CDS" id="AAF09254"/>
    </conflict>
</comment>
<reference key="1">
    <citation type="submission" date="1999-11" db="EMBL/GenBank/DDBJ databases">
        <title>NAC2 is highly expressed in root meristem.</title>
        <authorList>
            <person name="Colgan D.F."/>
            <person name="Xi Q."/>
            <person name="Chua N.-H."/>
        </authorList>
    </citation>
    <scope>NUCLEOTIDE SEQUENCE [MRNA]</scope>
    <scope>TISSUE SPECIFICITY</scope>
    <source>
        <strain>cv. Columbia</strain>
    </source>
</reference>
<reference key="2">
    <citation type="journal article" date="2000" name="Nature">
        <title>Sequence and analysis of chromosome 5 of the plant Arabidopsis thaliana.</title>
        <authorList>
            <person name="Tabata S."/>
            <person name="Kaneko T."/>
            <person name="Nakamura Y."/>
            <person name="Kotani H."/>
            <person name="Kato T."/>
            <person name="Asamizu E."/>
            <person name="Miyajima N."/>
            <person name="Sasamoto S."/>
            <person name="Kimura T."/>
            <person name="Hosouchi T."/>
            <person name="Kawashima K."/>
            <person name="Kohara M."/>
            <person name="Matsumoto M."/>
            <person name="Matsuno A."/>
            <person name="Muraki A."/>
            <person name="Nakayama S."/>
            <person name="Nakazaki N."/>
            <person name="Naruo K."/>
            <person name="Okumura S."/>
            <person name="Shinpo S."/>
            <person name="Takeuchi C."/>
            <person name="Wada T."/>
            <person name="Watanabe A."/>
            <person name="Yamada M."/>
            <person name="Yasuda M."/>
            <person name="Sato S."/>
            <person name="de la Bastide M."/>
            <person name="Huang E."/>
            <person name="Spiegel L."/>
            <person name="Gnoj L."/>
            <person name="O'Shaughnessy A."/>
            <person name="Preston R."/>
            <person name="Habermann K."/>
            <person name="Murray J."/>
            <person name="Johnson D."/>
            <person name="Rohlfing T."/>
            <person name="Nelson J."/>
            <person name="Stoneking T."/>
            <person name="Pepin K."/>
            <person name="Spieth J."/>
            <person name="Sekhon M."/>
            <person name="Armstrong J."/>
            <person name="Becker M."/>
            <person name="Belter E."/>
            <person name="Cordum H."/>
            <person name="Cordes M."/>
            <person name="Courtney L."/>
            <person name="Courtney W."/>
            <person name="Dante M."/>
            <person name="Du H."/>
            <person name="Edwards J."/>
            <person name="Fryman J."/>
            <person name="Haakensen B."/>
            <person name="Lamar E."/>
            <person name="Latreille P."/>
            <person name="Leonard S."/>
            <person name="Meyer R."/>
            <person name="Mulvaney E."/>
            <person name="Ozersky P."/>
            <person name="Riley A."/>
            <person name="Strowmatt C."/>
            <person name="Wagner-McPherson C."/>
            <person name="Wollam A."/>
            <person name="Yoakum M."/>
            <person name="Bell M."/>
            <person name="Dedhia N."/>
            <person name="Parnell L."/>
            <person name="Shah R."/>
            <person name="Rodriguez M."/>
            <person name="Hoon See L."/>
            <person name="Vil D."/>
            <person name="Baker J."/>
            <person name="Kirchoff K."/>
            <person name="Toth K."/>
            <person name="King L."/>
            <person name="Bahret A."/>
            <person name="Miller B."/>
            <person name="Marra M.A."/>
            <person name="Martienssen R."/>
            <person name="McCombie W.R."/>
            <person name="Wilson R.K."/>
            <person name="Murphy G."/>
            <person name="Bancroft I."/>
            <person name="Volckaert G."/>
            <person name="Wambutt R."/>
            <person name="Duesterhoeft A."/>
            <person name="Stiekema W."/>
            <person name="Pohl T."/>
            <person name="Entian K.-D."/>
            <person name="Terryn N."/>
            <person name="Hartley N."/>
            <person name="Bent E."/>
            <person name="Johnson S."/>
            <person name="Langham S.-A."/>
            <person name="McCullagh B."/>
            <person name="Robben J."/>
            <person name="Grymonprez B."/>
            <person name="Zimmermann W."/>
            <person name="Ramsperger U."/>
            <person name="Wedler H."/>
            <person name="Balke K."/>
            <person name="Wedler E."/>
            <person name="Peters S."/>
            <person name="van Staveren M."/>
            <person name="Dirkse W."/>
            <person name="Mooijman P."/>
            <person name="Klein Lankhorst R."/>
            <person name="Weitzenegger T."/>
            <person name="Bothe G."/>
            <person name="Rose M."/>
            <person name="Hauf J."/>
            <person name="Berneiser S."/>
            <person name="Hempel S."/>
            <person name="Feldpausch M."/>
            <person name="Lamberth S."/>
            <person name="Villarroel R."/>
            <person name="Gielen J."/>
            <person name="Ardiles W."/>
            <person name="Bents O."/>
            <person name="Lemcke K."/>
            <person name="Kolesov G."/>
            <person name="Mayer K.F.X."/>
            <person name="Rudd S."/>
            <person name="Schoof H."/>
            <person name="Schueller C."/>
            <person name="Zaccaria P."/>
            <person name="Mewes H.-W."/>
            <person name="Bevan M."/>
            <person name="Fransz P.F."/>
        </authorList>
    </citation>
    <scope>NUCLEOTIDE SEQUENCE [LARGE SCALE GENOMIC DNA]</scope>
    <source>
        <strain>cv. Columbia</strain>
    </source>
</reference>
<reference key="3">
    <citation type="journal article" date="2017" name="Plant J.">
        <title>Araport11: a complete reannotation of the Arabidopsis thaliana reference genome.</title>
        <authorList>
            <person name="Cheng C.Y."/>
            <person name="Krishnakumar V."/>
            <person name="Chan A.P."/>
            <person name="Thibaud-Nissen F."/>
            <person name="Schobel S."/>
            <person name="Town C.D."/>
        </authorList>
    </citation>
    <scope>GENOME REANNOTATION</scope>
    <source>
        <strain>cv. Columbia</strain>
    </source>
</reference>
<reference key="4">
    <citation type="journal article" date="2003" name="Science">
        <title>Empirical analysis of transcriptional activity in the Arabidopsis genome.</title>
        <authorList>
            <person name="Yamada K."/>
            <person name="Lim J."/>
            <person name="Dale J.M."/>
            <person name="Chen H."/>
            <person name="Shinn P."/>
            <person name="Palm C.J."/>
            <person name="Southwick A.M."/>
            <person name="Wu H.C."/>
            <person name="Kim C.J."/>
            <person name="Nguyen M."/>
            <person name="Pham P.K."/>
            <person name="Cheuk R.F."/>
            <person name="Karlin-Newmann G."/>
            <person name="Liu S.X."/>
            <person name="Lam B."/>
            <person name="Sakano H."/>
            <person name="Wu T."/>
            <person name="Yu G."/>
            <person name="Miranda M."/>
            <person name="Quach H.L."/>
            <person name="Tripp M."/>
            <person name="Chang C.H."/>
            <person name="Lee J.M."/>
            <person name="Toriumi M.J."/>
            <person name="Chan M.M."/>
            <person name="Tang C.C."/>
            <person name="Onodera C.S."/>
            <person name="Deng J.M."/>
            <person name="Akiyama K."/>
            <person name="Ansari Y."/>
            <person name="Arakawa T."/>
            <person name="Banh J."/>
            <person name="Banno F."/>
            <person name="Bowser L."/>
            <person name="Brooks S.Y."/>
            <person name="Carninci P."/>
            <person name="Chao Q."/>
            <person name="Choy N."/>
            <person name="Enju A."/>
            <person name="Goldsmith A.D."/>
            <person name="Gurjal M."/>
            <person name="Hansen N.F."/>
            <person name="Hayashizaki Y."/>
            <person name="Johnson-Hopson C."/>
            <person name="Hsuan V.W."/>
            <person name="Iida K."/>
            <person name="Karnes M."/>
            <person name="Khan S."/>
            <person name="Koesema E."/>
            <person name="Ishida J."/>
            <person name="Jiang P.X."/>
            <person name="Jones T."/>
            <person name="Kawai J."/>
            <person name="Kamiya A."/>
            <person name="Meyers C."/>
            <person name="Nakajima M."/>
            <person name="Narusaka M."/>
            <person name="Seki M."/>
            <person name="Sakurai T."/>
            <person name="Satou M."/>
            <person name="Tamse R."/>
            <person name="Vaysberg M."/>
            <person name="Wallender E.K."/>
            <person name="Wong C."/>
            <person name="Yamamura Y."/>
            <person name="Yuan S."/>
            <person name="Shinozaki K."/>
            <person name="Davis R.W."/>
            <person name="Theologis A."/>
            <person name="Ecker J.R."/>
        </authorList>
    </citation>
    <scope>NUCLEOTIDE SEQUENCE [LARGE SCALE MRNA]</scope>
    <source>
        <strain>cv. Columbia</strain>
    </source>
</reference>
<reference key="5">
    <citation type="journal article" date="2003" name="Genetics">
        <title>Selection on rapidly evolving proteins in the Arabidopsis genome.</title>
        <authorList>
            <person name="Barrier M."/>
            <person name="Bustamante C.D."/>
            <person name="Yu J."/>
            <person name="Purugganan M.D."/>
        </authorList>
    </citation>
    <scope>NUCLEOTIDE SEQUENCE [GENOMIC DNA] OF 178-535</scope>
    <scope>VARIANT ASP-393</scope>
    <source>
        <strain>cv. Bla-1</strain>
        <strain>cv. Bretagny</strain>
        <strain>cv. Bs-1</strain>
        <strain>cv. Bu-0</strain>
        <strain>cv. Chi-1</strain>
        <strain>cv. Hau-0</strain>
        <strain>cv. Jl-1</strain>
        <strain>cv. Kent</strain>
        <strain>cv. Lisse</strain>
    </source>
</reference>
<reference key="6">
    <citation type="journal article" date="2003" name="DNA Res.">
        <title>Comprehensive analysis of NAC family genes in Oryza sativa and Arabidopsis thaliana.</title>
        <authorList>
            <person name="Ooka H."/>
            <person name="Satoh K."/>
            <person name="Doi K."/>
            <person name="Nagata T."/>
            <person name="Otomo Y."/>
            <person name="Murakami K."/>
            <person name="Matsubara K."/>
            <person name="Osato N."/>
            <person name="Kawai J."/>
            <person name="Carninci P."/>
            <person name="Hayashizaki Y."/>
            <person name="Suzuki K."/>
            <person name="Kojima K."/>
            <person name="Takahara Y."/>
            <person name="Yamamoto K."/>
            <person name="Kikuchi S."/>
        </authorList>
    </citation>
    <scope>GENE FAMILY</scope>
    <scope>NOMENCLATURE</scope>
</reference>
<reference key="7">
    <citation type="journal article" date="2007" name="Nucleic Acids Res.">
        <title>Exploring membrane-associated NAC transcription factors in Arabidopsis: implications for membrane biology in genome regulation.</title>
        <authorList>
            <person name="Kim S.Y."/>
            <person name="Kim S.G."/>
            <person name="Kim Y.S."/>
            <person name="Seo P.J."/>
            <person name="Bae M."/>
            <person name="Yoon H.K."/>
            <person name="Park C.M."/>
        </authorList>
    </citation>
    <scope>GENE FAMILY</scope>
    <scope>NOMENCLATURE</scope>
    <scope>TISSUE SPECIFICITY</scope>
    <scope>INDUCTION</scope>
</reference>
<reference key="8">
    <citation type="journal article" date="2009" name="Plant Cell Physiol.">
        <title>Arabidopsis NAC transcription factor, ANAC078, regulates flavonoid biosynthesis under high-light.</title>
        <authorList>
            <person name="Morishita T."/>
            <person name="Kojima Y."/>
            <person name="Maruta T."/>
            <person name="Nishizawa-Yokoi A."/>
            <person name="Yabuta Y."/>
            <person name="Shigeoka S."/>
        </authorList>
    </citation>
    <scope>FUNCTION</scope>
    <scope>SUBCELLULAR LOCATION</scope>
    <scope>INDUCTION BY HIGH LIGHT</scope>
    <scope>DISRUPTION PHENOTYPE</scope>
</reference>
<reference key="9">
    <citation type="journal article" date="2011" name="Plant Sci.">
        <title>Involvement of Arabidopsis NAC transcription factor in the regulation of 20S and 26S proteasomes.</title>
        <authorList>
            <person name="Yabuta Y."/>
            <person name="Osada R."/>
            <person name="Morishita T."/>
            <person name="Nishizawa-Yokoi A."/>
            <person name="Tamoi M."/>
            <person name="Maruta T."/>
            <person name="Shigeoka S."/>
        </authorList>
    </citation>
    <scope>FUNCTION</scope>
</reference>
<sequence length="567" mass="63511">MGRGSVTSLAPGFRFHPTDEELVRYYLKRKVCNKPFKFDAISVTDIYKSEPWDLPDKSKLKSRDLEWYFFSMLDKKYSNGSKTNRATEKGYWKTTGKDREIRNGSRVVGMKKTLVYHKGRAPRGERTNWVMHEYRLSDEDLKKAGVPQEAYVLCRIFQKSGTGPKNGEQYGAPYLEEEWEEDGMTYVPAQDAFSEGLALNDDVYVDIDDIDEKPENLVVYDAVPILPNYCHGESSNNVESGNYSDSGNYIQPGNNVVDSGGYFEQPIETFEEDRKPIIREGSIQPCSLFPEEQIGCGVQDENVVNLESSNNNVFVADTCYSDIPIDHNYLPDEPFMDPNNNLPLNDGLYLETNDLSCAQQDDFNFEDYLSFFDDEGLTFDDSLLMGPEDFLPNQEALDQKPAPKELEKEVAGGKEAVEEKESGEGSSSKQDTDFKDFDSAPKYPFLKKTSHMLGAIPTPSSFASQFQTKDAMRLHAAQSSGSVHVTAGMMRISNMTLAADSGMGWSYDKNGNLNVVLSFGVVQQDDAMTASGSKTGITATRAMLVFMCLWVLLLSVSFKIVTMVSAR</sequence>
<dbReference type="EMBL" id="AF201456">
    <property type="protein sequence ID" value="AAF09254.1"/>
    <property type="status" value="ALT_FRAME"/>
    <property type="molecule type" value="mRNA"/>
</dbReference>
<dbReference type="EMBL" id="AL162875">
    <property type="protein sequence ID" value="CAB85547.1"/>
    <property type="molecule type" value="Genomic_DNA"/>
</dbReference>
<dbReference type="EMBL" id="CP002688">
    <property type="protein sequence ID" value="AED90739.1"/>
    <property type="molecule type" value="Genomic_DNA"/>
</dbReference>
<dbReference type="EMBL" id="AY099609">
    <property type="protein sequence ID" value="AAM20460.1"/>
    <property type="molecule type" value="mRNA"/>
</dbReference>
<dbReference type="EMBL" id="AY128859">
    <property type="protein sequence ID" value="AAM91259.1"/>
    <property type="molecule type" value="mRNA"/>
</dbReference>
<dbReference type="EMBL" id="AY140474">
    <property type="protein sequence ID" value="AAN46238.1"/>
    <property type="molecule type" value="Genomic_DNA"/>
</dbReference>
<dbReference type="EMBL" id="AY140475">
    <property type="protein sequence ID" value="AAN46239.1"/>
    <property type="molecule type" value="Genomic_DNA"/>
</dbReference>
<dbReference type="EMBL" id="AY140476">
    <property type="protein sequence ID" value="AAN46240.1"/>
    <property type="molecule type" value="Genomic_DNA"/>
</dbReference>
<dbReference type="EMBL" id="AY140477">
    <property type="protein sequence ID" value="AAN46241.1"/>
    <property type="molecule type" value="Genomic_DNA"/>
</dbReference>
<dbReference type="EMBL" id="AY140478">
    <property type="protein sequence ID" value="AAN46242.1"/>
    <property type="molecule type" value="Genomic_DNA"/>
</dbReference>
<dbReference type="EMBL" id="AY140479">
    <property type="protein sequence ID" value="AAN46243.1"/>
    <property type="molecule type" value="Genomic_DNA"/>
</dbReference>
<dbReference type="EMBL" id="AY140480">
    <property type="protein sequence ID" value="AAN46244.1"/>
    <property type="molecule type" value="Genomic_DNA"/>
</dbReference>
<dbReference type="EMBL" id="AY140481">
    <property type="protein sequence ID" value="AAN46245.1"/>
    <property type="molecule type" value="Genomic_DNA"/>
</dbReference>
<dbReference type="EMBL" id="AY140482">
    <property type="protein sequence ID" value="AAN46246.1"/>
    <property type="molecule type" value="Genomic_DNA"/>
</dbReference>
<dbReference type="PIR" id="T48437">
    <property type="entry name" value="T48437"/>
</dbReference>
<dbReference type="RefSeq" id="NP_196061.1">
    <property type="nucleotide sequence ID" value="NM_120523.4"/>
</dbReference>
<dbReference type="SMR" id="Q84K00"/>
<dbReference type="BioGRID" id="15599">
    <property type="interactions" value="1"/>
</dbReference>
<dbReference type="FunCoup" id="Q84K00">
    <property type="interactions" value="2915"/>
</dbReference>
<dbReference type="STRING" id="3702.Q84K00"/>
<dbReference type="GlyGen" id="Q84K00">
    <property type="glycosylation" value="2 sites"/>
</dbReference>
<dbReference type="PaxDb" id="3702-AT5G04410.1"/>
<dbReference type="ProteomicsDB" id="251228"/>
<dbReference type="EnsemblPlants" id="AT5G04410.1">
    <property type="protein sequence ID" value="AT5G04410.1"/>
    <property type="gene ID" value="AT5G04410"/>
</dbReference>
<dbReference type="GeneID" id="830320"/>
<dbReference type="Gramene" id="AT5G04410.1">
    <property type="protein sequence ID" value="AT5G04410.1"/>
    <property type="gene ID" value="AT5G04410"/>
</dbReference>
<dbReference type="KEGG" id="ath:AT5G04410"/>
<dbReference type="Araport" id="AT5G04410"/>
<dbReference type="TAIR" id="AT5G04410">
    <property type="gene designation" value="NAC2"/>
</dbReference>
<dbReference type="eggNOG" id="ENOG502QTKI">
    <property type="taxonomic scope" value="Eukaryota"/>
</dbReference>
<dbReference type="HOGENOM" id="CLU_032008_1_0_1"/>
<dbReference type="InParanoid" id="Q84K00"/>
<dbReference type="OMA" id="QIGCGVQ"/>
<dbReference type="PhylomeDB" id="Q84K00"/>
<dbReference type="PRO" id="PR:Q84K00"/>
<dbReference type="Proteomes" id="UP000006548">
    <property type="component" value="Chromosome 5"/>
</dbReference>
<dbReference type="ExpressionAtlas" id="Q84K00">
    <property type="expression patterns" value="baseline and differential"/>
</dbReference>
<dbReference type="GO" id="GO:0005737">
    <property type="term" value="C:cytoplasm"/>
    <property type="evidence" value="ECO:0000314"/>
    <property type="project" value="TAIR"/>
</dbReference>
<dbReference type="GO" id="GO:0016020">
    <property type="term" value="C:membrane"/>
    <property type="evidence" value="ECO:0007669"/>
    <property type="project" value="UniProtKB-SubCell"/>
</dbReference>
<dbReference type="GO" id="GO:0005634">
    <property type="term" value="C:nucleus"/>
    <property type="evidence" value="ECO:0000314"/>
    <property type="project" value="TAIR"/>
</dbReference>
<dbReference type="GO" id="GO:0003677">
    <property type="term" value="F:DNA binding"/>
    <property type="evidence" value="ECO:0007669"/>
    <property type="project" value="UniProtKB-KW"/>
</dbReference>
<dbReference type="GO" id="GO:0003700">
    <property type="term" value="F:DNA-binding transcription factor activity"/>
    <property type="evidence" value="ECO:0000250"/>
    <property type="project" value="TAIR"/>
</dbReference>
<dbReference type="GO" id="GO:0045893">
    <property type="term" value="P:positive regulation of DNA-templated transcription"/>
    <property type="evidence" value="ECO:0000314"/>
    <property type="project" value="TAIR"/>
</dbReference>
<dbReference type="GO" id="GO:0009962">
    <property type="term" value="P:regulation of flavonoid biosynthetic process"/>
    <property type="evidence" value="ECO:0000315"/>
    <property type="project" value="TAIR"/>
</dbReference>
<dbReference type="GO" id="GO:0009644">
    <property type="term" value="P:response to high light intensity"/>
    <property type="evidence" value="ECO:0000270"/>
    <property type="project" value="TAIR"/>
</dbReference>
<dbReference type="FunFam" id="2.170.150.80:FF:000002">
    <property type="entry name" value="Nac domain-containing protein 86"/>
    <property type="match status" value="1"/>
</dbReference>
<dbReference type="Gene3D" id="2.170.150.80">
    <property type="entry name" value="NAC domain"/>
    <property type="match status" value="1"/>
</dbReference>
<dbReference type="InterPro" id="IPR003441">
    <property type="entry name" value="NAC-dom"/>
</dbReference>
<dbReference type="InterPro" id="IPR036093">
    <property type="entry name" value="NAC_dom_sf"/>
</dbReference>
<dbReference type="PANTHER" id="PTHR31744:SF210">
    <property type="entry name" value="NAC DOMAIN-CONTAINING PROTEIN 86-LIKE"/>
    <property type="match status" value="1"/>
</dbReference>
<dbReference type="PANTHER" id="PTHR31744">
    <property type="entry name" value="PROTEIN CUP-SHAPED COTYLEDON 2-RELATED"/>
    <property type="match status" value="1"/>
</dbReference>
<dbReference type="Pfam" id="PF02365">
    <property type="entry name" value="NAM"/>
    <property type="match status" value="1"/>
</dbReference>
<dbReference type="SUPFAM" id="SSF101941">
    <property type="entry name" value="NAC domain"/>
    <property type="match status" value="1"/>
</dbReference>
<dbReference type="PROSITE" id="PS51005">
    <property type="entry name" value="NAC"/>
    <property type="match status" value="1"/>
</dbReference>
<proteinExistence type="evidence at transcript level"/>